<name>PSBB_CAPBU</name>
<feature type="chain" id="PRO_0000359802" description="Photosystem II CP47 reaction center protein">
    <location>
        <begin position="1"/>
        <end position="508"/>
    </location>
</feature>
<feature type="transmembrane region" description="Helical" evidence="1">
    <location>
        <begin position="21"/>
        <end position="36"/>
    </location>
</feature>
<feature type="transmembrane region" description="Helical" evidence="1">
    <location>
        <begin position="101"/>
        <end position="115"/>
    </location>
</feature>
<feature type="transmembrane region" description="Helical" evidence="1">
    <location>
        <begin position="140"/>
        <end position="156"/>
    </location>
</feature>
<feature type="transmembrane region" description="Helical" evidence="1">
    <location>
        <begin position="203"/>
        <end position="218"/>
    </location>
</feature>
<feature type="transmembrane region" description="Helical" evidence="1">
    <location>
        <begin position="237"/>
        <end position="252"/>
    </location>
</feature>
<feature type="transmembrane region" description="Helical" evidence="1">
    <location>
        <begin position="457"/>
        <end position="472"/>
    </location>
</feature>
<sequence>MGLPWYRVHTVVLNDPGRLLSVHIMHTALVAGWAGSMALYELAVFDPSDPVLDPMWRQGMFVIPFMTRLGITNSWGGWNITGGTITNPGLWSYEGVAAAHIVFSGLCFLAAIWHWVYWDLEIFCDERTGKPSLDLPKIFGIHLFLSGVACFGFGAFHVTGLYGPGIWVSDPYGLTGKVQPVNPAWGVEGFDPFVPGGIASHHIAAGTLGILAGLFHLSVRPPQRLYKGLRMGNIETVLSSSIAAVFFAAFVVAGTMWYGSATTPIELFGPTRYQWDQGYFQQEIYRRVSAGLAENQSLSEAWAKIPEKLAFYDYIGNNPAKGGLFRAGSMDNGDGIAVGWLGHPVFRNKEGRELFVRRMPTFFETFPVVLVDGDGIVRADVPFRRAESKYSVEQVGVTVEFYGGELNGVSYSDPATVKKYARRAQLGEIFELDRATLKSDGVFRSSPRGWFTFGHASFALLFFFGHIWHGSRTLFRDVFAGIDPDLDAQVEFGAFQKLGDPTTKRQAV</sequence>
<keyword id="KW-0148">Chlorophyll</keyword>
<keyword id="KW-0150">Chloroplast</keyword>
<keyword id="KW-0157">Chromophore</keyword>
<keyword id="KW-0472">Membrane</keyword>
<keyword id="KW-0602">Photosynthesis</keyword>
<keyword id="KW-0604">Photosystem II</keyword>
<keyword id="KW-0934">Plastid</keyword>
<keyword id="KW-0793">Thylakoid</keyword>
<keyword id="KW-0812">Transmembrane</keyword>
<keyword id="KW-1133">Transmembrane helix</keyword>
<geneLocation type="chloroplast"/>
<evidence type="ECO:0000255" key="1">
    <source>
        <dbReference type="HAMAP-Rule" id="MF_01495"/>
    </source>
</evidence>
<dbReference type="EMBL" id="AP009371">
    <property type="protein sequence ID" value="BAF50223.1"/>
    <property type="molecule type" value="Genomic_DNA"/>
</dbReference>
<dbReference type="RefSeq" id="YP_001123399.1">
    <property type="nucleotide sequence ID" value="NC_009270.1"/>
</dbReference>
<dbReference type="SMR" id="A4QKL8"/>
<dbReference type="GeneID" id="4961625"/>
<dbReference type="GO" id="GO:0009535">
    <property type="term" value="C:chloroplast thylakoid membrane"/>
    <property type="evidence" value="ECO:0007669"/>
    <property type="project" value="UniProtKB-SubCell"/>
</dbReference>
<dbReference type="GO" id="GO:0009523">
    <property type="term" value="C:photosystem II"/>
    <property type="evidence" value="ECO:0007669"/>
    <property type="project" value="UniProtKB-KW"/>
</dbReference>
<dbReference type="GO" id="GO:0016168">
    <property type="term" value="F:chlorophyll binding"/>
    <property type="evidence" value="ECO:0007669"/>
    <property type="project" value="UniProtKB-UniRule"/>
</dbReference>
<dbReference type="GO" id="GO:0045156">
    <property type="term" value="F:electron transporter, transferring electrons within the cyclic electron transport pathway of photosynthesis activity"/>
    <property type="evidence" value="ECO:0007669"/>
    <property type="project" value="InterPro"/>
</dbReference>
<dbReference type="GO" id="GO:0009772">
    <property type="term" value="P:photosynthetic electron transport in photosystem II"/>
    <property type="evidence" value="ECO:0007669"/>
    <property type="project" value="InterPro"/>
</dbReference>
<dbReference type="FunFam" id="3.10.680.10:FF:000001">
    <property type="entry name" value="Photosystem II CP47 reaction center protein"/>
    <property type="match status" value="1"/>
</dbReference>
<dbReference type="Gene3D" id="3.10.680.10">
    <property type="entry name" value="Photosystem II CP47 reaction center protein"/>
    <property type="match status" value="1"/>
</dbReference>
<dbReference type="HAMAP" id="MF_01495">
    <property type="entry name" value="PSII_PsbB_CP47"/>
    <property type="match status" value="1"/>
</dbReference>
<dbReference type="InterPro" id="IPR000932">
    <property type="entry name" value="PS_antenna-like"/>
</dbReference>
<dbReference type="InterPro" id="IPR036001">
    <property type="entry name" value="PS_II_antenna-like_sf"/>
</dbReference>
<dbReference type="InterPro" id="IPR017486">
    <property type="entry name" value="PSII_PsbB"/>
</dbReference>
<dbReference type="NCBIfam" id="TIGR03039">
    <property type="entry name" value="PS_II_CP47"/>
    <property type="match status" value="1"/>
</dbReference>
<dbReference type="PANTHER" id="PTHR33180">
    <property type="entry name" value="PHOTOSYSTEM II CP43 REACTION CENTER PROTEIN"/>
    <property type="match status" value="1"/>
</dbReference>
<dbReference type="PANTHER" id="PTHR33180:SF38">
    <property type="entry name" value="PHOTOSYSTEM II CP47 REACTION CENTER PROTEIN"/>
    <property type="match status" value="1"/>
</dbReference>
<dbReference type="Pfam" id="PF00421">
    <property type="entry name" value="PSII"/>
    <property type="match status" value="1"/>
</dbReference>
<dbReference type="SUPFAM" id="SSF161077">
    <property type="entry name" value="Photosystem II antenna protein-like"/>
    <property type="match status" value="1"/>
</dbReference>
<gene>
    <name evidence="1" type="primary">psbB</name>
</gene>
<protein>
    <recommendedName>
        <fullName evidence="1">Photosystem II CP47 reaction center protein</fullName>
    </recommendedName>
    <alternativeName>
        <fullName evidence="1">PSII 47 kDa protein</fullName>
    </alternativeName>
    <alternativeName>
        <fullName evidence="1">Protein CP-47</fullName>
    </alternativeName>
</protein>
<proteinExistence type="inferred from homology"/>
<organism>
    <name type="scientific">Capsella bursa-pastoris</name>
    <name type="common">Shepherd's purse</name>
    <name type="synonym">Thlaspi bursa-pastoris</name>
    <dbReference type="NCBI Taxonomy" id="3719"/>
    <lineage>
        <taxon>Eukaryota</taxon>
        <taxon>Viridiplantae</taxon>
        <taxon>Streptophyta</taxon>
        <taxon>Embryophyta</taxon>
        <taxon>Tracheophyta</taxon>
        <taxon>Spermatophyta</taxon>
        <taxon>Magnoliopsida</taxon>
        <taxon>eudicotyledons</taxon>
        <taxon>Gunneridae</taxon>
        <taxon>Pentapetalae</taxon>
        <taxon>rosids</taxon>
        <taxon>malvids</taxon>
        <taxon>Brassicales</taxon>
        <taxon>Brassicaceae</taxon>
        <taxon>Camelineae</taxon>
        <taxon>Capsella</taxon>
    </lineage>
</organism>
<comment type="function">
    <text evidence="1">One of the components of the core complex of photosystem II (PSII). It binds chlorophyll and helps catalyze the primary light-induced photochemical processes of PSII. PSII is a light-driven water:plastoquinone oxidoreductase, using light energy to abstract electrons from H(2)O, generating O(2) and a proton gradient subsequently used for ATP formation.</text>
</comment>
<comment type="cofactor">
    <text evidence="1">Binds multiple chlorophylls. PSII binds additional chlorophylls, carotenoids and specific lipids.</text>
</comment>
<comment type="subunit">
    <text evidence="1">PSII is composed of 1 copy each of membrane proteins PsbA, PsbB, PsbC, PsbD, PsbE, PsbF, PsbH, PsbI, PsbJ, PsbK, PsbL, PsbM, PsbT, PsbX, PsbY, PsbZ, Psb30/Ycf12, at least 3 peripheral proteins of the oxygen-evolving complex and a large number of cofactors. It forms dimeric complexes.</text>
</comment>
<comment type="subcellular location">
    <subcellularLocation>
        <location evidence="1">Plastid</location>
        <location evidence="1">Chloroplast thylakoid membrane</location>
        <topology evidence="1">Multi-pass membrane protein</topology>
    </subcellularLocation>
</comment>
<comment type="similarity">
    <text evidence="1">Belongs to the PsbB/PsbC family. PsbB subfamily.</text>
</comment>
<reference key="1">
    <citation type="submission" date="2007-03" db="EMBL/GenBank/DDBJ databases">
        <title>Sequencing analysis of Capsella bursa-pastoris JO22 chloroplast DNA.</title>
        <authorList>
            <person name="Hosouchi T."/>
            <person name="Tsuruoka H."/>
            <person name="Kotani H."/>
        </authorList>
    </citation>
    <scope>NUCLEOTIDE SEQUENCE [LARGE SCALE GENOMIC DNA]</scope>
</reference>
<accession>A4QKL8</accession>